<accession>Q9H628</accession>
<gene>
    <name type="primary">RERGL</name>
</gene>
<organism>
    <name type="scientific">Homo sapiens</name>
    <name type="common">Human</name>
    <dbReference type="NCBI Taxonomy" id="9606"/>
    <lineage>
        <taxon>Eukaryota</taxon>
        <taxon>Metazoa</taxon>
        <taxon>Chordata</taxon>
        <taxon>Craniata</taxon>
        <taxon>Vertebrata</taxon>
        <taxon>Euteleostomi</taxon>
        <taxon>Mammalia</taxon>
        <taxon>Eutheria</taxon>
        <taxon>Euarchontoglires</taxon>
        <taxon>Primates</taxon>
        <taxon>Haplorrhini</taxon>
        <taxon>Catarrhini</taxon>
        <taxon>Hominidae</taxon>
        <taxon>Homo</taxon>
    </lineage>
</organism>
<dbReference type="EC" id="3.6.5.2" evidence="2"/>
<dbReference type="EMBL" id="AK026308">
    <property type="protein sequence ID" value="BAB15439.1"/>
    <property type="molecule type" value="mRNA"/>
</dbReference>
<dbReference type="EMBL" id="CH471094">
    <property type="protein sequence ID" value="EAW96385.1"/>
    <property type="molecule type" value="Genomic_DNA"/>
</dbReference>
<dbReference type="EMBL" id="BC042888">
    <property type="protein sequence ID" value="AAH42888.1"/>
    <property type="molecule type" value="mRNA"/>
</dbReference>
<dbReference type="CCDS" id="CCDS8679.1"/>
<dbReference type="RefSeq" id="NP_001273130.1">
    <property type="nucleotide sequence ID" value="NM_001286201.1"/>
</dbReference>
<dbReference type="RefSeq" id="NP_079006.1">
    <property type="nucleotide sequence ID" value="NM_024730.4"/>
</dbReference>
<dbReference type="SMR" id="Q9H628"/>
<dbReference type="FunCoup" id="Q9H628">
    <property type="interactions" value="268"/>
</dbReference>
<dbReference type="STRING" id="9606.ENSP00000229002"/>
<dbReference type="iPTMnet" id="Q9H628"/>
<dbReference type="PhosphoSitePlus" id="Q9H628"/>
<dbReference type="BioMuta" id="RERGL"/>
<dbReference type="DMDM" id="74752686"/>
<dbReference type="PaxDb" id="9606-ENSP00000229002"/>
<dbReference type="PeptideAtlas" id="Q9H628"/>
<dbReference type="Antibodypedia" id="23848">
    <property type="antibodies" value="19 antibodies from 12 providers"/>
</dbReference>
<dbReference type="DNASU" id="79785"/>
<dbReference type="Ensembl" id="ENST00000229002.6">
    <property type="protein sequence ID" value="ENSP00000229002.2"/>
    <property type="gene ID" value="ENSG00000111404.7"/>
</dbReference>
<dbReference type="GeneID" id="79785"/>
<dbReference type="KEGG" id="hsa:79785"/>
<dbReference type="UCSC" id="uc001rdq.4">
    <property type="organism name" value="human"/>
</dbReference>
<dbReference type="AGR" id="HGNC:26213"/>
<dbReference type="CTD" id="79785"/>
<dbReference type="DisGeNET" id="79785"/>
<dbReference type="GeneCards" id="RERGL"/>
<dbReference type="HGNC" id="HGNC:26213">
    <property type="gene designation" value="RERGL"/>
</dbReference>
<dbReference type="HPA" id="ENSG00000111404">
    <property type="expression patterns" value="Low tissue specificity"/>
</dbReference>
<dbReference type="MalaCards" id="RERGL"/>
<dbReference type="neXtProt" id="NX_Q9H628"/>
<dbReference type="OpenTargets" id="ENSG00000111404"/>
<dbReference type="PharmGKB" id="PA162401119"/>
<dbReference type="VEuPathDB" id="HostDB:ENSG00000111404"/>
<dbReference type="eggNOG" id="KOG0395">
    <property type="taxonomic scope" value="Eukaryota"/>
</dbReference>
<dbReference type="GeneTree" id="ENSGT00940000161146"/>
<dbReference type="InParanoid" id="Q9H628"/>
<dbReference type="OrthoDB" id="18798at2759"/>
<dbReference type="PAN-GO" id="Q9H628">
    <property type="GO annotations" value="0 GO annotations based on evolutionary models"/>
</dbReference>
<dbReference type="PhylomeDB" id="Q9H628"/>
<dbReference type="TreeFam" id="TF318030"/>
<dbReference type="PathwayCommons" id="Q9H628"/>
<dbReference type="SignaLink" id="Q9H628"/>
<dbReference type="BioGRID-ORCS" id="79785">
    <property type="hits" value="5 hits in 1141 CRISPR screens"/>
</dbReference>
<dbReference type="ChiTaRS" id="RERGL">
    <property type="organism name" value="human"/>
</dbReference>
<dbReference type="GenomeRNAi" id="79785"/>
<dbReference type="Pharos" id="Q9H628">
    <property type="development level" value="Tdark"/>
</dbReference>
<dbReference type="PRO" id="PR:Q9H628"/>
<dbReference type="Proteomes" id="UP000005640">
    <property type="component" value="Chromosome 12"/>
</dbReference>
<dbReference type="RNAct" id="Q9H628">
    <property type="molecule type" value="protein"/>
</dbReference>
<dbReference type="Bgee" id="ENSG00000111404">
    <property type="expression patterns" value="Expressed in tibial artery and 146 other cell types or tissues"/>
</dbReference>
<dbReference type="ExpressionAtlas" id="Q9H628">
    <property type="expression patterns" value="baseline and differential"/>
</dbReference>
<dbReference type="GO" id="GO:0003925">
    <property type="term" value="F:G protein activity"/>
    <property type="evidence" value="ECO:0007669"/>
    <property type="project" value="UniProtKB-EC"/>
</dbReference>
<dbReference type="GO" id="GO:0005525">
    <property type="term" value="F:GTP binding"/>
    <property type="evidence" value="ECO:0007669"/>
    <property type="project" value="UniProtKB-KW"/>
</dbReference>
<dbReference type="CDD" id="cd04146">
    <property type="entry name" value="RERG_RasL11_like"/>
    <property type="match status" value="1"/>
</dbReference>
<dbReference type="Gene3D" id="3.40.50.300">
    <property type="entry name" value="P-loop containing nucleotide triphosphate hydrolases"/>
    <property type="match status" value="1"/>
</dbReference>
<dbReference type="InterPro" id="IPR027417">
    <property type="entry name" value="P-loop_NTPase"/>
</dbReference>
<dbReference type="InterPro" id="IPR051065">
    <property type="entry name" value="Ras-related_GTPase"/>
</dbReference>
<dbReference type="InterPro" id="IPR001806">
    <property type="entry name" value="Small_GTPase"/>
</dbReference>
<dbReference type="PANTHER" id="PTHR45704">
    <property type="entry name" value="RAS-LIKE FAMILY MEMBER 11"/>
    <property type="match status" value="1"/>
</dbReference>
<dbReference type="Pfam" id="PF00071">
    <property type="entry name" value="Ras"/>
    <property type="match status" value="1"/>
</dbReference>
<dbReference type="SMART" id="SM00175">
    <property type="entry name" value="RAB"/>
    <property type="match status" value="1"/>
</dbReference>
<dbReference type="SMART" id="SM00173">
    <property type="entry name" value="RAS"/>
    <property type="match status" value="1"/>
</dbReference>
<dbReference type="SUPFAM" id="SSF52540">
    <property type="entry name" value="P-loop containing nucleoside triphosphate hydrolases"/>
    <property type="match status" value="1"/>
</dbReference>
<dbReference type="PROSITE" id="PS51421">
    <property type="entry name" value="RAS"/>
    <property type="match status" value="1"/>
</dbReference>
<proteinExistence type="evidence at transcript level"/>
<comment type="function">
    <text evidence="1">Binds GDP/GTP and may possess intrinsic GTPase activity.</text>
</comment>
<comment type="catalytic activity">
    <reaction evidence="2">
        <text>GTP + H2O = GDP + phosphate + H(+)</text>
        <dbReference type="Rhea" id="RHEA:19669"/>
        <dbReference type="ChEBI" id="CHEBI:15377"/>
        <dbReference type="ChEBI" id="CHEBI:15378"/>
        <dbReference type="ChEBI" id="CHEBI:37565"/>
        <dbReference type="ChEBI" id="CHEBI:43474"/>
        <dbReference type="ChEBI" id="CHEBI:58189"/>
        <dbReference type="EC" id="3.6.5.2"/>
    </reaction>
</comment>
<comment type="similarity">
    <text evidence="3">Belongs to the small GTPase superfamily. Ras family.</text>
</comment>
<reference key="1">
    <citation type="journal article" date="2004" name="Nat. Genet.">
        <title>Complete sequencing and characterization of 21,243 full-length human cDNAs.</title>
        <authorList>
            <person name="Ota T."/>
            <person name="Suzuki Y."/>
            <person name="Nishikawa T."/>
            <person name="Otsuki T."/>
            <person name="Sugiyama T."/>
            <person name="Irie R."/>
            <person name="Wakamatsu A."/>
            <person name="Hayashi K."/>
            <person name="Sato H."/>
            <person name="Nagai K."/>
            <person name="Kimura K."/>
            <person name="Makita H."/>
            <person name="Sekine M."/>
            <person name="Obayashi M."/>
            <person name="Nishi T."/>
            <person name="Shibahara T."/>
            <person name="Tanaka T."/>
            <person name="Ishii S."/>
            <person name="Yamamoto J."/>
            <person name="Saito K."/>
            <person name="Kawai Y."/>
            <person name="Isono Y."/>
            <person name="Nakamura Y."/>
            <person name="Nagahari K."/>
            <person name="Murakami K."/>
            <person name="Yasuda T."/>
            <person name="Iwayanagi T."/>
            <person name="Wagatsuma M."/>
            <person name="Shiratori A."/>
            <person name="Sudo H."/>
            <person name="Hosoiri T."/>
            <person name="Kaku Y."/>
            <person name="Kodaira H."/>
            <person name="Kondo H."/>
            <person name="Sugawara M."/>
            <person name="Takahashi M."/>
            <person name="Kanda K."/>
            <person name="Yokoi T."/>
            <person name="Furuya T."/>
            <person name="Kikkawa E."/>
            <person name="Omura Y."/>
            <person name="Abe K."/>
            <person name="Kamihara K."/>
            <person name="Katsuta N."/>
            <person name="Sato K."/>
            <person name="Tanikawa M."/>
            <person name="Yamazaki M."/>
            <person name="Ninomiya K."/>
            <person name="Ishibashi T."/>
            <person name="Yamashita H."/>
            <person name="Murakawa K."/>
            <person name="Fujimori K."/>
            <person name="Tanai H."/>
            <person name="Kimata M."/>
            <person name="Watanabe M."/>
            <person name="Hiraoka S."/>
            <person name="Chiba Y."/>
            <person name="Ishida S."/>
            <person name="Ono Y."/>
            <person name="Takiguchi S."/>
            <person name="Watanabe S."/>
            <person name="Yosida M."/>
            <person name="Hotuta T."/>
            <person name="Kusano J."/>
            <person name="Kanehori K."/>
            <person name="Takahashi-Fujii A."/>
            <person name="Hara H."/>
            <person name="Tanase T.-O."/>
            <person name="Nomura Y."/>
            <person name="Togiya S."/>
            <person name="Komai F."/>
            <person name="Hara R."/>
            <person name="Takeuchi K."/>
            <person name="Arita M."/>
            <person name="Imose N."/>
            <person name="Musashino K."/>
            <person name="Yuuki H."/>
            <person name="Oshima A."/>
            <person name="Sasaki N."/>
            <person name="Aotsuka S."/>
            <person name="Yoshikawa Y."/>
            <person name="Matsunawa H."/>
            <person name="Ichihara T."/>
            <person name="Shiohata N."/>
            <person name="Sano S."/>
            <person name="Moriya S."/>
            <person name="Momiyama H."/>
            <person name="Satoh N."/>
            <person name="Takami S."/>
            <person name="Terashima Y."/>
            <person name="Suzuki O."/>
            <person name="Nakagawa S."/>
            <person name="Senoh A."/>
            <person name="Mizoguchi H."/>
            <person name="Goto Y."/>
            <person name="Shimizu F."/>
            <person name="Wakebe H."/>
            <person name="Hishigaki H."/>
            <person name="Watanabe T."/>
            <person name="Sugiyama A."/>
            <person name="Takemoto M."/>
            <person name="Kawakami B."/>
            <person name="Yamazaki M."/>
            <person name="Watanabe K."/>
            <person name="Kumagai A."/>
            <person name="Itakura S."/>
            <person name="Fukuzumi Y."/>
            <person name="Fujimori Y."/>
            <person name="Komiyama M."/>
            <person name="Tashiro H."/>
            <person name="Tanigami A."/>
            <person name="Fujiwara T."/>
            <person name="Ono T."/>
            <person name="Yamada K."/>
            <person name="Fujii Y."/>
            <person name="Ozaki K."/>
            <person name="Hirao M."/>
            <person name="Ohmori Y."/>
            <person name="Kawabata A."/>
            <person name="Hikiji T."/>
            <person name="Kobatake N."/>
            <person name="Inagaki H."/>
            <person name="Ikema Y."/>
            <person name="Okamoto S."/>
            <person name="Okitani R."/>
            <person name="Kawakami T."/>
            <person name="Noguchi S."/>
            <person name="Itoh T."/>
            <person name="Shigeta K."/>
            <person name="Senba T."/>
            <person name="Matsumura K."/>
            <person name="Nakajima Y."/>
            <person name="Mizuno T."/>
            <person name="Morinaga M."/>
            <person name="Sasaki M."/>
            <person name="Togashi T."/>
            <person name="Oyama M."/>
            <person name="Hata H."/>
            <person name="Watanabe M."/>
            <person name="Komatsu T."/>
            <person name="Mizushima-Sugano J."/>
            <person name="Satoh T."/>
            <person name="Shirai Y."/>
            <person name="Takahashi Y."/>
            <person name="Nakagawa K."/>
            <person name="Okumura K."/>
            <person name="Nagase T."/>
            <person name="Nomura N."/>
            <person name="Kikuchi H."/>
            <person name="Masuho Y."/>
            <person name="Yamashita R."/>
            <person name="Nakai K."/>
            <person name="Yada T."/>
            <person name="Nakamura Y."/>
            <person name="Ohara O."/>
            <person name="Isogai T."/>
            <person name="Sugano S."/>
        </authorList>
    </citation>
    <scope>NUCLEOTIDE SEQUENCE [LARGE SCALE MRNA]</scope>
    <source>
        <tissue>Small intestine</tissue>
    </source>
</reference>
<reference key="2">
    <citation type="submission" date="2005-07" db="EMBL/GenBank/DDBJ databases">
        <authorList>
            <person name="Mural R.J."/>
            <person name="Istrail S."/>
            <person name="Sutton G.G."/>
            <person name="Florea L."/>
            <person name="Halpern A.L."/>
            <person name="Mobarry C.M."/>
            <person name="Lippert R."/>
            <person name="Walenz B."/>
            <person name="Shatkay H."/>
            <person name="Dew I."/>
            <person name="Miller J.R."/>
            <person name="Flanigan M.J."/>
            <person name="Edwards N.J."/>
            <person name="Bolanos R."/>
            <person name="Fasulo D."/>
            <person name="Halldorsson B.V."/>
            <person name="Hannenhalli S."/>
            <person name="Turner R."/>
            <person name="Yooseph S."/>
            <person name="Lu F."/>
            <person name="Nusskern D.R."/>
            <person name="Shue B.C."/>
            <person name="Zheng X.H."/>
            <person name="Zhong F."/>
            <person name="Delcher A.L."/>
            <person name="Huson D.H."/>
            <person name="Kravitz S.A."/>
            <person name="Mouchard L."/>
            <person name="Reinert K."/>
            <person name="Remington K.A."/>
            <person name="Clark A.G."/>
            <person name="Waterman M.S."/>
            <person name="Eichler E.E."/>
            <person name="Adams M.D."/>
            <person name="Hunkapiller M.W."/>
            <person name="Myers E.W."/>
            <person name="Venter J.C."/>
        </authorList>
    </citation>
    <scope>NUCLEOTIDE SEQUENCE [LARGE SCALE GENOMIC DNA]</scope>
</reference>
<reference key="3">
    <citation type="journal article" date="2004" name="Genome Res.">
        <title>The status, quality, and expansion of the NIH full-length cDNA project: the Mammalian Gene Collection (MGC).</title>
        <authorList>
            <consortium name="The MGC Project Team"/>
        </authorList>
    </citation>
    <scope>NUCLEOTIDE SEQUENCE [LARGE SCALE MRNA]</scope>
    <source>
        <tissue>Brain</tissue>
    </source>
</reference>
<protein>
    <recommendedName>
        <fullName>Ras-related and estrogen-regulated growth inhibitor-like protein</fullName>
        <ecNumber evidence="2">3.6.5.2</ecNumber>
    </recommendedName>
    <alternativeName>
        <fullName>RERG/Ras-like protein</fullName>
    </alternativeName>
</protein>
<evidence type="ECO:0000250" key="1"/>
<evidence type="ECO:0000250" key="2">
    <source>
        <dbReference type="UniProtKB" id="Q96A58"/>
    </source>
</evidence>
<evidence type="ECO:0000305" key="3"/>
<keyword id="KW-0342">GTP-binding</keyword>
<keyword id="KW-0378">Hydrolase</keyword>
<keyword id="KW-0547">Nucleotide-binding</keyword>
<keyword id="KW-1185">Reference proteome</keyword>
<sequence>MSNFLHLKYNEKSVSVTKALTVRFLTKRFIGEYASNFESIYKKHLCLERKQLNLEIYDPCSQTQKAKFSLTSELHWADGFVIVYDISDRSSFAFAKALIYRIREPQTSHCKRAVESAVFLVGNKRDLCHVREVGWEEGQKLALENRCQFCELSAAEQSLEVEMMFIRIIKDILINFKLKEKRRPSGSKSMAKLINNVFGKRRKSV</sequence>
<feature type="chain" id="PRO_0000320563" description="Ras-related and estrogen-regulated growth inhibitor-like protein">
    <location>
        <begin position="1"/>
        <end position="205"/>
    </location>
</feature>
<feature type="region of interest" description="Small GTPase-like">
    <location>
        <begin position="1"/>
        <end position="205"/>
    </location>
</feature>
<feature type="binding site" evidence="1">
    <location>
        <begin position="11"/>
        <end position="18"/>
    </location>
    <ligand>
        <name>GTP</name>
        <dbReference type="ChEBI" id="CHEBI:37565"/>
    </ligand>
</feature>
<feature type="binding site" evidence="1">
    <location>
        <begin position="58"/>
        <end position="64"/>
    </location>
    <ligand>
        <name>GTP</name>
        <dbReference type="ChEBI" id="CHEBI:37565"/>
    </ligand>
</feature>
<feature type="binding site" evidence="1">
    <location>
        <begin position="123"/>
        <end position="126"/>
    </location>
    <ligand>
        <name>GTP</name>
        <dbReference type="ChEBI" id="CHEBI:37565"/>
    </ligand>
</feature>
<feature type="sequence variant" id="VAR_039208" description="In dbSNP:rs941048.">
    <original>M</original>
    <variation>V</variation>
    <location>
        <position position="163"/>
    </location>
</feature>
<name>RERGL_HUMAN</name>